<accession>O74700</accession>
<accession>D3DLM8</accession>
<dbReference type="EMBL" id="U18530">
    <property type="status" value="NOT_ANNOTATED_CDS"/>
    <property type="molecule type" value="Genomic_DNA"/>
</dbReference>
<dbReference type="EMBL" id="AF093244">
    <property type="protein sequence ID" value="AAC83169.1"/>
    <property type="molecule type" value="Genomic_DNA"/>
</dbReference>
<dbReference type="EMBL" id="AY557798">
    <property type="protein sequence ID" value="AAS56124.1"/>
    <property type="molecule type" value="Genomic_DNA"/>
</dbReference>
<dbReference type="EMBL" id="BK006939">
    <property type="protein sequence ID" value="DAA07632.1"/>
    <property type="molecule type" value="Genomic_DNA"/>
</dbReference>
<dbReference type="PIR" id="S78717">
    <property type="entry name" value="S78717"/>
</dbReference>
<dbReference type="RefSeq" id="NP_010894.1">
    <property type="nucleotide sequence ID" value="NM_001184349.1"/>
</dbReference>
<dbReference type="PDB" id="3DXR">
    <property type="method" value="X-ray"/>
    <property type="resolution" value="2.50 A"/>
    <property type="chains" value="A=1-87"/>
</dbReference>
<dbReference type="PDB" id="6LO8">
    <property type="method" value="EM"/>
    <property type="resolution" value="3.83 A"/>
    <property type="chains" value="E/G/I=1-87"/>
</dbReference>
<dbReference type="PDBsum" id="3DXR"/>
<dbReference type="PDBsum" id="6LO8"/>
<dbReference type="EMDB" id="EMD-0935"/>
<dbReference type="SASBDB" id="O74700"/>
<dbReference type="SMR" id="O74700"/>
<dbReference type="BioGRID" id="36709">
    <property type="interactions" value="26"/>
</dbReference>
<dbReference type="ComplexPortal" id="CPX-1629">
    <property type="entry name" value="TIM22 mitochondrial inner membrane twin-pore carrier translocase complex"/>
</dbReference>
<dbReference type="ComplexPortal" id="CPX-2268">
    <property type="entry name" value="TIM9-TIM10 mitochondrial intermembrane space protein transporter complex"/>
</dbReference>
<dbReference type="ComplexPortal" id="CPX-2950">
    <property type="entry name" value="TIM9-TIM10-TIM12 mitochondrial intermembrane space protein transporter complex"/>
</dbReference>
<dbReference type="DIP" id="DIP-5806N"/>
<dbReference type="FunCoup" id="O74700">
    <property type="interactions" value="1126"/>
</dbReference>
<dbReference type="IntAct" id="O74700">
    <property type="interactions" value="3"/>
</dbReference>
<dbReference type="MINT" id="O74700"/>
<dbReference type="STRING" id="4932.YEL020W-A"/>
<dbReference type="TCDB" id="3.A.8.1.1">
    <property type="family name" value="the mitochondrial protein translocase (mpt) family"/>
</dbReference>
<dbReference type="iPTMnet" id="O74700"/>
<dbReference type="PaxDb" id="4932-YEL020W-A"/>
<dbReference type="PeptideAtlas" id="O74700"/>
<dbReference type="EnsemblFungi" id="YEL020W-A_mRNA">
    <property type="protein sequence ID" value="YEL020W-A"/>
    <property type="gene ID" value="YEL020W-A"/>
</dbReference>
<dbReference type="GeneID" id="856693"/>
<dbReference type="KEGG" id="sce:YEL020W-A"/>
<dbReference type="AGR" id="SGD:S000007256"/>
<dbReference type="SGD" id="S000007256">
    <property type="gene designation" value="TIM9"/>
</dbReference>
<dbReference type="VEuPathDB" id="FungiDB:YEL020W-A"/>
<dbReference type="eggNOG" id="KOG3479">
    <property type="taxonomic scope" value="Eukaryota"/>
</dbReference>
<dbReference type="HOGENOM" id="CLU_141397_3_0_1"/>
<dbReference type="InParanoid" id="O74700"/>
<dbReference type="OMA" id="QDFLRMY"/>
<dbReference type="OrthoDB" id="1551503at2759"/>
<dbReference type="BioCyc" id="YEAST:G3O-30387-MONOMER"/>
<dbReference type="Reactome" id="R-SCE-1268020">
    <property type="pathway name" value="Mitochondrial protein import"/>
</dbReference>
<dbReference type="BioGRID-ORCS" id="856693">
    <property type="hits" value="7 hits in 10 CRISPR screens"/>
</dbReference>
<dbReference type="EvolutionaryTrace" id="O74700"/>
<dbReference type="PRO" id="PR:O74700"/>
<dbReference type="Proteomes" id="UP000002311">
    <property type="component" value="Chromosome V"/>
</dbReference>
<dbReference type="RNAct" id="O74700">
    <property type="molecule type" value="protein"/>
</dbReference>
<dbReference type="GO" id="GO:0005743">
    <property type="term" value="C:mitochondrial inner membrane"/>
    <property type="evidence" value="ECO:0000314"/>
    <property type="project" value="ComplexPortal"/>
</dbReference>
<dbReference type="GO" id="GO:0005758">
    <property type="term" value="C:mitochondrial intermembrane space"/>
    <property type="evidence" value="ECO:0000314"/>
    <property type="project" value="ComplexPortal"/>
</dbReference>
<dbReference type="GO" id="GO:0042719">
    <property type="term" value="C:mitochondrial intermembrane space protein transporter complex"/>
    <property type="evidence" value="ECO:0000314"/>
    <property type="project" value="SGD"/>
</dbReference>
<dbReference type="GO" id="GO:0005739">
    <property type="term" value="C:mitochondrion"/>
    <property type="evidence" value="ECO:0000314"/>
    <property type="project" value="ComplexPortal"/>
</dbReference>
<dbReference type="GO" id="GO:0042721">
    <property type="term" value="C:TIM22 mitochondrial import inner membrane insertion complex"/>
    <property type="evidence" value="ECO:0000314"/>
    <property type="project" value="SGD"/>
</dbReference>
<dbReference type="GO" id="GO:0046872">
    <property type="term" value="F:metal ion binding"/>
    <property type="evidence" value="ECO:0007669"/>
    <property type="project" value="UniProtKB-KW"/>
</dbReference>
<dbReference type="GO" id="GO:0140318">
    <property type="term" value="F:protein transporter activity"/>
    <property type="evidence" value="ECO:0000314"/>
    <property type="project" value="SGD"/>
</dbReference>
<dbReference type="GO" id="GO:0051082">
    <property type="term" value="F:unfolded protein binding"/>
    <property type="evidence" value="ECO:0000314"/>
    <property type="project" value="SGD"/>
</dbReference>
<dbReference type="GO" id="GO:0045039">
    <property type="term" value="P:protein insertion into mitochondrial inner membrane"/>
    <property type="evidence" value="ECO:0000314"/>
    <property type="project" value="SGD"/>
</dbReference>
<dbReference type="FunFam" id="1.10.287.810:FF:000008">
    <property type="entry name" value="Mitochondrial import inner membrane translocase subunit TIM9"/>
    <property type="match status" value="1"/>
</dbReference>
<dbReference type="Gene3D" id="1.10.287.810">
    <property type="entry name" value="Mitochondrial import inner membrane translocase subunit tim13 like domains"/>
    <property type="match status" value="1"/>
</dbReference>
<dbReference type="InterPro" id="IPR050673">
    <property type="entry name" value="Mito_inner_translocase_sub"/>
</dbReference>
<dbReference type="InterPro" id="IPR004217">
    <property type="entry name" value="Tim10-like"/>
</dbReference>
<dbReference type="InterPro" id="IPR035427">
    <property type="entry name" value="Tim10-like_dom_sf"/>
</dbReference>
<dbReference type="PANTHER" id="PTHR13172">
    <property type="entry name" value="MITOCHONDRIAL IMPORT INNER MEMBRANE TRANSLOCASE SUBUNIT TIM9B"/>
    <property type="match status" value="1"/>
</dbReference>
<dbReference type="Pfam" id="PF02953">
    <property type="entry name" value="zf-Tim10_DDP"/>
    <property type="match status" value="1"/>
</dbReference>
<dbReference type="SUPFAM" id="SSF144122">
    <property type="entry name" value="Tim10-like"/>
    <property type="match status" value="1"/>
</dbReference>
<proteinExistence type="evidence at protein level"/>
<protein>
    <recommendedName>
        <fullName>Mitochondrial import inner membrane translocase subunit TIM9</fullName>
    </recommendedName>
</protein>
<evidence type="ECO:0000269" key="1">
    <source>
    </source>
</evidence>
<evidence type="ECO:0000269" key="2">
    <source>
    </source>
</evidence>
<evidence type="ECO:0000269" key="3">
    <source>
    </source>
</evidence>
<evidence type="ECO:0000269" key="4">
    <source>
    </source>
</evidence>
<evidence type="ECO:0000269" key="5">
    <source>
    </source>
</evidence>
<evidence type="ECO:0000269" key="6">
    <source>
    </source>
</evidence>
<evidence type="ECO:0000269" key="7">
    <source>
    </source>
</evidence>
<evidence type="ECO:0000269" key="8">
    <source>
    </source>
</evidence>
<evidence type="ECO:0000269" key="9">
    <source>
    </source>
</evidence>
<evidence type="ECO:0000269" key="10">
    <source>
    </source>
</evidence>
<evidence type="ECO:0000269" key="11">
    <source>
    </source>
</evidence>
<evidence type="ECO:0000269" key="12">
    <source>
    </source>
</evidence>
<evidence type="ECO:0000269" key="13">
    <source>
    </source>
</evidence>
<evidence type="ECO:0000269" key="14">
    <source>
    </source>
</evidence>
<evidence type="ECO:0000305" key="15"/>
<evidence type="ECO:0000305" key="16">
    <source>
    </source>
</evidence>
<evidence type="ECO:0007744" key="17">
    <source>
    </source>
</evidence>
<evidence type="ECO:0007829" key="18">
    <source>
        <dbReference type="PDB" id="3DXR"/>
    </source>
</evidence>
<comment type="function">
    <text evidence="1 2 3 4 6 7 9 10 13 14">Mitochondrial intermembrane chaperone that participates in the import and insertion of multi-pass transmembrane proteins into the mitochondrial inner membrane. Also required for the transfer of beta-barrel precursors from the TOM complex to the sorting and assembly machinery (SAM complex) of the outer membrane. Acts as a chaperone-like protein that protects the hydrophobic precursors from aggregation and guide them through the mitochondrial intermembrane space. Compared to TIM10, it may have a strong structural role.</text>
</comment>
<comment type="subunit">
    <text evidence="5 6 13 14">Heterohexamer; composed of 3 copies of TIM9 and 3 copies of TIM10, named soluble 70 kDa complex. Associates with the TIM12 component of the TIM22 complex, whose core is composed of TIM18, TIM22 and TIM54. Interacts with the transmembrane regions of multi-pass transmembrane proteins in transit.</text>
</comment>
<comment type="interaction">
    <interactant intactId="EBI-9108">
        <id>O74700</id>
    </interactant>
    <interactant intactId="EBI-9115">
        <id>P87108</id>
        <label>TIM10</label>
    </interactant>
    <organismsDiffer>false</organismsDiffer>
    <experiments>7</experiments>
</comment>
<comment type="subcellular location">
    <subcellularLocation>
        <location evidence="11 13 14">Mitochondrion inner membrane</location>
        <topology evidence="11 13 14">Peripheral membrane protein</topology>
        <orientation evidence="11 13 14">Intermembrane side</orientation>
    </subcellularLocation>
    <subcellularLocation>
        <location evidence="12">Mitochondrion intermembrane space</location>
    </subcellularLocation>
</comment>
<comment type="domain">
    <text evidence="16">The twin CX3C motif contains 4 conserved Cys residues that form 2 disulfide bonds in the mitochondrial intermembrane space. However, during the transit of TIM9 from cytoplasm into mitochondrion, the Cys residues probably coordinate zinc, thereby preventing folding and allowing its transfer across mitochondrial outer membrane (Probable).</text>
</comment>
<comment type="similarity">
    <text evidence="15">Belongs to the small Tim family.</text>
</comment>
<organism>
    <name type="scientific">Saccharomyces cerevisiae (strain ATCC 204508 / S288c)</name>
    <name type="common">Baker's yeast</name>
    <dbReference type="NCBI Taxonomy" id="559292"/>
    <lineage>
        <taxon>Eukaryota</taxon>
        <taxon>Fungi</taxon>
        <taxon>Dikarya</taxon>
        <taxon>Ascomycota</taxon>
        <taxon>Saccharomycotina</taxon>
        <taxon>Saccharomycetes</taxon>
        <taxon>Saccharomycetales</taxon>
        <taxon>Saccharomycetaceae</taxon>
        <taxon>Saccharomyces</taxon>
    </lineage>
</organism>
<sequence>MDALNSKEQQEFQKVVEQKQMKDFMRLYSNLVERCFTDCVNDFTTSKLTNKEQTCIMKCSEKFLKHSERVGQRFQEQNAALGQGLGR</sequence>
<reference key="1">
    <citation type="journal article" date="1998" name="EMBO J.">
        <title>Tim9p, an essential partner subunit of Tim10p for the import of mitochondrial carrier proteins.</title>
        <authorList>
            <person name="Koehler C.M."/>
            <person name="Merchant S."/>
            <person name="Oppliger W."/>
            <person name="Schmid K."/>
            <person name="Jarosch E."/>
            <person name="Dolfini L."/>
            <person name="Junne T."/>
            <person name="Schatz G."/>
            <person name="Tokatlidis K."/>
        </authorList>
    </citation>
    <scope>NUCLEOTIDE SEQUENCE [GENOMIC DNA]</scope>
    <scope>PARTIAL PROTEIN SEQUENCE</scope>
    <scope>FUNCTION</scope>
    <scope>SUBCELLULAR LOCATION</scope>
    <scope>SUBUNIT</scope>
    <scope>INTERACTION WITH TIM10</scope>
    <scope>MUTAGENESIS OF SER-67</scope>
</reference>
<reference key="2">
    <citation type="journal article" date="1997" name="Nature">
        <title>The nucleotide sequence of Saccharomyces cerevisiae chromosome V.</title>
        <authorList>
            <person name="Dietrich F.S."/>
            <person name="Mulligan J.T."/>
            <person name="Hennessy K.M."/>
            <person name="Yelton M.A."/>
            <person name="Allen E."/>
            <person name="Araujo R."/>
            <person name="Aviles E."/>
            <person name="Berno A."/>
            <person name="Brennan T."/>
            <person name="Carpenter J."/>
            <person name="Chen E."/>
            <person name="Cherry J.M."/>
            <person name="Chung E."/>
            <person name="Duncan M."/>
            <person name="Guzman E."/>
            <person name="Hartzell G."/>
            <person name="Hunicke-Smith S."/>
            <person name="Hyman R.W."/>
            <person name="Kayser A."/>
            <person name="Komp C."/>
            <person name="Lashkari D."/>
            <person name="Lew H."/>
            <person name="Lin D."/>
            <person name="Mosedale D."/>
            <person name="Nakahara K."/>
            <person name="Namath A."/>
            <person name="Norgren R."/>
            <person name="Oefner P."/>
            <person name="Oh C."/>
            <person name="Petel F.X."/>
            <person name="Roberts D."/>
            <person name="Sehl P."/>
            <person name="Schramm S."/>
            <person name="Shogren T."/>
            <person name="Smith V."/>
            <person name="Taylor P."/>
            <person name="Wei Y."/>
            <person name="Botstein D."/>
            <person name="Davis R.W."/>
        </authorList>
    </citation>
    <scope>NUCLEOTIDE SEQUENCE [LARGE SCALE GENOMIC DNA]</scope>
    <source>
        <strain>ATCC 204508 / S288c</strain>
    </source>
</reference>
<reference key="3">
    <citation type="journal article" date="2014" name="G3 (Bethesda)">
        <title>The reference genome sequence of Saccharomyces cerevisiae: Then and now.</title>
        <authorList>
            <person name="Engel S.R."/>
            <person name="Dietrich F.S."/>
            <person name="Fisk D.G."/>
            <person name="Binkley G."/>
            <person name="Balakrishnan R."/>
            <person name="Costanzo M.C."/>
            <person name="Dwight S.S."/>
            <person name="Hitz B.C."/>
            <person name="Karra K."/>
            <person name="Nash R.S."/>
            <person name="Weng S."/>
            <person name="Wong E.D."/>
            <person name="Lloyd P."/>
            <person name="Skrzypek M.S."/>
            <person name="Miyasato S.R."/>
            <person name="Simison M."/>
            <person name="Cherry J.M."/>
        </authorList>
    </citation>
    <scope>GENOME REANNOTATION</scope>
    <source>
        <strain>ATCC 204508 / S288c</strain>
    </source>
</reference>
<reference key="4">
    <citation type="journal article" date="2007" name="Genome Res.">
        <title>Approaching a complete repository of sequence-verified protein-encoding clones for Saccharomyces cerevisiae.</title>
        <authorList>
            <person name="Hu Y."/>
            <person name="Rolfs A."/>
            <person name="Bhullar B."/>
            <person name="Murthy T.V.S."/>
            <person name="Zhu C."/>
            <person name="Berger M.F."/>
            <person name="Camargo A.A."/>
            <person name="Kelley F."/>
            <person name="McCarron S."/>
            <person name="Jepson D."/>
            <person name="Richardson A."/>
            <person name="Raphael J."/>
            <person name="Moreira D."/>
            <person name="Taycher E."/>
            <person name="Zuo D."/>
            <person name="Mohr S."/>
            <person name="Kane M.F."/>
            <person name="Williamson J."/>
            <person name="Simpson A.J.G."/>
            <person name="Bulyk M.L."/>
            <person name="Harlow E."/>
            <person name="Marsischky G."/>
            <person name="Kolodner R.D."/>
            <person name="LaBaer J."/>
        </authorList>
    </citation>
    <scope>NUCLEOTIDE SEQUENCE [GENOMIC DNA]</scope>
    <source>
        <strain>ATCC 204508 / S288c</strain>
    </source>
</reference>
<reference key="5">
    <citation type="journal article" date="1999" name="EMBO J.">
        <title>Tim9, a new component of the TIM22.54 translocase in mitochondria.</title>
        <authorList>
            <person name="Adam A."/>
            <person name="Endres M."/>
            <person name="Sirrenberg C."/>
            <person name="Lottspeich F."/>
            <person name="Neupert W."/>
            <person name="Brunner M."/>
        </authorList>
    </citation>
    <scope>PROTEIN SEQUENCE OF 27-33 AND 74-87</scope>
    <scope>FUNCTION</scope>
    <scope>SUBUNIT</scope>
    <scope>SUBCELLULAR LOCATION</scope>
    <scope>INTERACTION WITH TIM10 AND TIM12</scope>
</reference>
<reference key="6">
    <citation type="journal article" date="2004" name="J. Biol. Chem.">
        <title>The structural basis of the TIM10 chaperone assembly.</title>
        <authorList>
            <person name="Lu H."/>
            <person name="Golovanov A.P."/>
            <person name="Alcock F."/>
            <person name="Grossmann J.G."/>
            <person name="Allen S."/>
            <person name="Lian L.-Y."/>
            <person name="Tokatlidis K."/>
        </authorList>
    </citation>
    <scope>PARTIAL PROTEIN SEQUENCE</scope>
</reference>
<reference key="7">
    <citation type="journal article" date="1999" name="EMBO J.">
        <title>Transport of the ADP/ATP carrier of mitochondria from the TOM complex to the TIM22.54 complex.</title>
        <authorList>
            <person name="Endres M."/>
            <person name="Neupert W."/>
            <person name="Brunner M."/>
        </authorList>
    </citation>
    <scope>FUNCTION</scope>
</reference>
<reference key="8">
    <citation type="journal article" date="2000" name="J. Cell Biol.">
        <title>Two intermembrane space TIM complexes interact with different domains of Tim23p during its import into mitochondria.</title>
        <authorList>
            <person name="Davis A.J."/>
            <person name="Sepuri N.B."/>
            <person name="Holder J."/>
            <person name="Johnson A.E."/>
            <person name="Jensen R.E."/>
        </authorList>
    </citation>
    <scope>FUNCTION</scope>
</reference>
<reference key="9">
    <citation type="journal article" date="2001" name="EMBO J.">
        <title>Functional reconstitution of the import of the yeast ADP/ATP carrier mediated by the TIM10 complex.</title>
        <authorList>
            <person name="Luciano P."/>
            <person name="Vial S."/>
            <person name="Vergnolle M.A.S."/>
            <person name="Dyall S.D."/>
            <person name="Robinson D.R."/>
            <person name="Tokatlidis K."/>
        </authorList>
    </citation>
    <scope>FUNCTION</scope>
</reference>
<reference key="10">
    <citation type="journal article" date="2001" name="Mol. Cell. Biol.">
        <title>The essential function of the small Tim proteins in the TIM22 import pathway does not depend on formation of the soluble 70-kilodalton complex.</title>
        <authorList>
            <person name="Murphy M.P."/>
            <person name="Leuenberger D."/>
            <person name="Curran S.P."/>
            <person name="Oppliger W."/>
            <person name="Koehler C.M."/>
        </authorList>
    </citation>
    <scope>FUNCTION</scope>
</reference>
<reference key="11">
    <citation type="journal article" date="2002" name="EMBO J.">
        <title>The Tim9p-Tim10p complex binds to the transmembrane domains of the ADP/ATP carrier.</title>
        <authorList>
            <person name="Curran S.P."/>
            <person name="Leuenberger D."/>
            <person name="Oppliger W."/>
            <person name="Koehler C.M."/>
        </authorList>
    </citation>
    <scope>SUBUNIT</scope>
    <scope>DISULFIDE BONDS</scope>
    <scope>LACK OF ZINC-BINDING WHEN PRESENT IN THE MITOCHONDRIAL INTERMEMBRANE SPACE</scope>
</reference>
<reference key="12">
    <citation type="journal article" date="2002" name="J. Biol. Chem.">
        <title>Assembly of Tim9 and Tim10 into a functional chaperone.</title>
        <authorList>
            <person name="Vial S."/>
            <person name="Lu H."/>
            <person name="Allen S."/>
            <person name="Savory P."/>
            <person name="Thornton D."/>
            <person name="Sheehan J."/>
            <person name="Tokatlidis K."/>
        </authorList>
    </citation>
    <scope>FUNCTION</scope>
    <scope>SUBUNIT</scope>
</reference>
<reference key="13">
    <citation type="journal article" date="2002" name="Mol. Cell. Biol.">
        <title>Mitochondrial import of the ADP/ATP carrier: the essential TIM complex of the intermembrane space is required for precursor release from the TOM complex.</title>
        <authorList>
            <person name="Truscott K.N."/>
            <person name="Wiedemann N."/>
            <person name="Rehling P."/>
            <person name="Mueller H."/>
            <person name="Meisinger C."/>
            <person name="Pfanner N."/>
            <person name="Guiard B."/>
        </authorList>
    </citation>
    <scope>FUNCTION</scope>
</reference>
<reference key="14">
    <citation type="journal article" date="2003" name="Traffic">
        <title>The role of Tim9p in the assembly of the TIM22 import complexes.</title>
        <authorList>
            <person name="Leuenberger D."/>
            <person name="Curran S.P."/>
            <person name="Wong D."/>
            <person name="Koehler C.M."/>
        </authorList>
    </citation>
    <scope>MUTAGENESIS OF VAL-40; GLU-52 AND SER-60</scope>
</reference>
<reference key="15">
    <citation type="journal article" date="2004" name="J. Biol. Chem.">
        <title>Biogenesis of the protein import channel Tom40 of the mitochondrial outer membrane: intermembrane space components are involved in an early stage of the assembly pathway.</title>
        <authorList>
            <person name="Wiedemann N."/>
            <person name="Truscott K.N."/>
            <person name="Pfannschmidt S."/>
            <person name="Guiard B."/>
            <person name="Meisinger C."/>
            <person name="Pfanner N."/>
        </authorList>
    </citation>
    <scope>FUNCTION IN TRANSFER OF BETA-BARREL PROTEINS</scope>
</reference>
<reference key="16">
    <citation type="journal article" date="2005" name="J. Mol. Biol.">
        <title>Distinct domains of small Tims involved in subunit interaction and substrate recognition.</title>
        <authorList>
            <person name="Vergnolle M.A.S."/>
            <person name="Baud C."/>
            <person name="Golovanov A.P."/>
            <person name="Alcock F."/>
            <person name="Luciano P."/>
            <person name="Lian L.-Y."/>
            <person name="Tokatlidis K."/>
        </authorList>
    </citation>
    <scope>FUNCTION</scope>
</reference>
<reference key="17">
    <citation type="journal article" date="2006" name="J. Proteome Res.">
        <title>Toward the complete yeast mitochondrial proteome: multidimensional separation techniques for mitochondrial proteomics.</title>
        <authorList>
            <person name="Reinders J."/>
            <person name="Zahedi R.P."/>
            <person name="Pfanner N."/>
            <person name="Meisinger C."/>
            <person name="Sickmann A."/>
        </authorList>
    </citation>
    <scope>SUBCELLULAR LOCATION [LARGE SCALE ANALYSIS]</scope>
    <scope>IDENTIFICATION BY MASS SPECTROMETRY</scope>
</reference>
<reference key="18">
    <citation type="journal article" date="2012" name="Mol. Cell. Proteomics">
        <title>Intermembrane space proteome of yeast mitochondria.</title>
        <authorList>
            <person name="Voegtle F.N."/>
            <person name="Burkhart J.M."/>
            <person name="Rao S."/>
            <person name="Gerbeth C."/>
            <person name="Hinrichs J."/>
            <person name="Martinou J.C."/>
            <person name="Chacinska A."/>
            <person name="Sickmann A."/>
            <person name="Zahedi R.P."/>
            <person name="Meisinger C."/>
        </authorList>
    </citation>
    <scope>IDENTIFICATION BY MASS SPECTROMETRY</scope>
    <scope>SUBCELLULAR LOCATION [LARGE SCALE ANALYSIS]</scope>
</reference>
<reference key="19">
    <citation type="journal article" date="2012" name="Proc. Natl. Acad. Sci. U.S.A.">
        <title>N-terminal acetylome analyses and functional insights of the N-terminal acetyltransferase NatB.</title>
        <authorList>
            <person name="Van Damme P."/>
            <person name="Lasa M."/>
            <person name="Polevoda B."/>
            <person name="Gazquez C."/>
            <person name="Elosegui-Artola A."/>
            <person name="Kim D.S."/>
            <person name="De Juan-Pardo E."/>
            <person name="Demeyer K."/>
            <person name="Hole K."/>
            <person name="Larrea E."/>
            <person name="Timmerman E."/>
            <person name="Prieto J."/>
            <person name="Arnesen T."/>
            <person name="Sherman F."/>
            <person name="Gevaert K."/>
            <person name="Aldabe R."/>
        </authorList>
    </citation>
    <scope>ACETYLATION [LARGE SCALE ANALYSIS] AT MET-1</scope>
    <scope>IDENTIFICATION BY MASS SPECTROMETRY [LARGE SCALE ANALYSIS]</scope>
</reference>
<keyword id="KW-0002">3D-structure</keyword>
<keyword id="KW-0007">Acetylation</keyword>
<keyword id="KW-0143">Chaperone</keyword>
<keyword id="KW-0903">Direct protein sequencing</keyword>
<keyword id="KW-1015">Disulfide bond</keyword>
<keyword id="KW-0472">Membrane</keyword>
<keyword id="KW-0479">Metal-binding</keyword>
<keyword id="KW-0496">Mitochondrion</keyword>
<keyword id="KW-0999">Mitochondrion inner membrane</keyword>
<keyword id="KW-0653">Protein transport</keyword>
<keyword id="KW-1185">Reference proteome</keyword>
<keyword id="KW-0811">Translocation</keyword>
<keyword id="KW-0813">Transport</keyword>
<keyword id="KW-0862">Zinc</keyword>
<name>TIM9_YEAST</name>
<gene>
    <name type="primary">TIM9</name>
    <name type="ordered locus">YEL020W-A</name>
    <name type="ORF">YEL020BW</name>
</gene>
<feature type="chain" id="PRO_0000193610" description="Mitochondrial import inner membrane translocase subunit TIM9">
    <location>
        <begin position="1"/>
        <end position="87"/>
    </location>
</feature>
<feature type="short sequence motif" description="Twin CX3C motif" evidence="16">
    <location>
        <begin position="35"/>
        <end position="59"/>
    </location>
</feature>
<feature type="modified residue" description="N-acetylmethionine" evidence="17">
    <location>
        <position position="1"/>
    </location>
</feature>
<feature type="disulfide bond" evidence="16">
    <location>
        <begin position="35"/>
        <end position="59"/>
    </location>
</feature>
<feature type="disulfide bond" evidence="16">
    <location>
        <begin position="39"/>
        <end position="55"/>
    </location>
</feature>
<feature type="mutagenesis site" description="In tim9-3; impairs the import of mitochondrial carrier proteins into mitochondria; when associated with P-60." evidence="8">
    <original>V</original>
    <variation>A</variation>
    <location>
        <position position="40"/>
    </location>
</feature>
<feature type="mutagenesis site" description="In tim9-19; impairs the import of mitochondrial carrier proteins into mitochondria." evidence="8">
    <original>E</original>
    <variation>G</variation>
    <location>
        <position position="52"/>
    </location>
</feature>
<feature type="mutagenesis site" description="In tim9-3; impairs the import of mitochondrial carrier proteins into mitochondria; when associated with A-40." evidence="8">
    <original>S</original>
    <variation>P</variation>
    <location>
        <position position="60"/>
    </location>
</feature>
<feature type="mutagenesis site" description="Impairs the import of mitochondrial carrier proteins into mitochondria." evidence="13">
    <original>S</original>
    <variation>C</variation>
    <location>
        <position position="67"/>
    </location>
</feature>
<feature type="helix" evidence="18">
    <location>
        <begin position="14"/>
        <end position="39"/>
    </location>
</feature>
<feature type="strand" evidence="18">
    <location>
        <begin position="44"/>
        <end position="47"/>
    </location>
</feature>
<feature type="helix" evidence="18">
    <location>
        <begin position="50"/>
        <end position="76"/>
    </location>
</feature>